<organism>
    <name type="scientific">Salmonella dublin (strain CT_02021853)</name>
    <dbReference type="NCBI Taxonomy" id="439851"/>
    <lineage>
        <taxon>Bacteria</taxon>
        <taxon>Pseudomonadati</taxon>
        <taxon>Pseudomonadota</taxon>
        <taxon>Gammaproteobacteria</taxon>
        <taxon>Enterobacterales</taxon>
        <taxon>Enterobacteriaceae</taxon>
        <taxon>Salmonella</taxon>
    </lineage>
</organism>
<comment type="function">
    <text evidence="1">Purine salvage pathway enzyme that catalyzes the transfer of the ribosyl-5-phosphate group from 5-phospho-alpha-D-ribose 1-diphosphate (PRPP) to the N9 position of the 6-oxopurines guanine and xanthine to form the corresponding ribonucleotides GMP (guanosine 5'-monophosphate) and XMP (xanthosine 5'-monophosphate), with the release of PPi. To a lesser extent, also acts on hypoxanthine.</text>
</comment>
<comment type="catalytic activity">
    <reaction evidence="1">
        <text>GMP + diphosphate = guanine + 5-phospho-alpha-D-ribose 1-diphosphate</text>
        <dbReference type="Rhea" id="RHEA:25424"/>
        <dbReference type="ChEBI" id="CHEBI:16235"/>
        <dbReference type="ChEBI" id="CHEBI:33019"/>
        <dbReference type="ChEBI" id="CHEBI:58017"/>
        <dbReference type="ChEBI" id="CHEBI:58115"/>
    </reaction>
    <physiologicalReaction direction="right-to-left" evidence="1">
        <dbReference type="Rhea" id="RHEA:25426"/>
    </physiologicalReaction>
</comment>
<comment type="catalytic activity">
    <reaction evidence="1">
        <text>XMP + diphosphate = xanthine + 5-phospho-alpha-D-ribose 1-diphosphate</text>
        <dbReference type="Rhea" id="RHEA:10800"/>
        <dbReference type="ChEBI" id="CHEBI:17712"/>
        <dbReference type="ChEBI" id="CHEBI:33019"/>
        <dbReference type="ChEBI" id="CHEBI:57464"/>
        <dbReference type="ChEBI" id="CHEBI:58017"/>
        <dbReference type="EC" id="2.4.2.22"/>
    </reaction>
    <physiologicalReaction direction="right-to-left" evidence="1">
        <dbReference type="Rhea" id="RHEA:10802"/>
    </physiologicalReaction>
</comment>
<comment type="catalytic activity">
    <reaction evidence="1">
        <text>IMP + diphosphate = hypoxanthine + 5-phospho-alpha-D-ribose 1-diphosphate</text>
        <dbReference type="Rhea" id="RHEA:17973"/>
        <dbReference type="ChEBI" id="CHEBI:17368"/>
        <dbReference type="ChEBI" id="CHEBI:33019"/>
        <dbReference type="ChEBI" id="CHEBI:58017"/>
        <dbReference type="ChEBI" id="CHEBI:58053"/>
    </reaction>
    <physiologicalReaction direction="right-to-left" evidence="1">
        <dbReference type="Rhea" id="RHEA:17975"/>
    </physiologicalReaction>
</comment>
<comment type="cofactor">
    <cofactor evidence="1">
        <name>Mg(2+)</name>
        <dbReference type="ChEBI" id="CHEBI:18420"/>
    </cofactor>
</comment>
<comment type="pathway">
    <text evidence="1">Purine metabolism; GMP biosynthesis via salvage pathway; GMP from guanine: step 1/1.</text>
</comment>
<comment type="pathway">
    <text evidence="1">Purine metabolism; XMP biosynthesis via salvage pathway; XMP from xanthine: step 1/1.</text>
</comment>
<comment type="subunit">
    <text evidence="1">Homotetramer.</text>
</comment>
<comment type="subcellular location">
    <subcellularLocation>
        <location evidence="1">Cell inner membrane</location>
        <topology evidence="1">Peripheral membrane protein</topology>
    </subcellularLocation>
</comment>
<comment type="similarity">
    <text evidence="1">Belongs to the purine/pyrimidine phosphoribosyltransferase family. XGPT subfamily.</text>
</comment>
<gene>
    <name evidence="1" type="primary">gpt</name>
    <name type="ordered locus">SeD_A0347</name>
</gene>
<reference key="1">
    <citation type="journal article" date="2011" name="J. Bacteriol.">
        <title>Comparative genomics of 28 Salmonella enterica isolates: evidence for CRISPR-mediated adaptive sublineage evolution.</title>
        <authorList>
            <person name="Fricke W.F."/>
            <person name="Mammel M.K."/>
            <person name="McDermott P.F."/>
            <person name="Tartera C."/>
            <person name="White D.G."/>
            <person name="Leclerc J.E."/>
            <person name="Ravel J."/>
            <person name="Cebula T.A."/>
        </authorList>
    </citation>
    <scope>NUCLEOTIDE SEQUENCE [LARGE SCALE GENOMIC DNA]</scope>
    <source>
        <strain>CT_02021853</strain>
    </source>
</reference>
<evidence type="ECO:0000255" key="1">
    <source>
        <dbReference type="HAMAP-Rule" id="MF_01903"/>
    </source>
</evidence>
<protein>
    <recommendedName>
        <fullName evidence="1">Xanthine-guanine phosphoribosyltransferase</fullName>
        <shortName evidence="1">XGPRT</shortName>
        <ecNumber evidence="1">2.4.2.-</ecNumber>
        <ecNumber evidence="1">2.4.2.22</ecNumber>
    </recommendedName>
    <alternativeName>
        <fullName evidence="1">Xanthine phosphoribosyltransferase</fullName>
    </alternativeName>
</protein>
<name>XGPT_SALDC</name>
<sequence length="152" mass="16970">MSEKYVVTWDMLQIHARKLASRLMPSEQWKGIIAVSRGGLVPGALLARELGIRHVDTVCISSYDHDNQRELKVLKRAEGDGEGFIVIDDLVDTGGTAVAIREMYPKAHFVTIFAKPAGRPLVDDYVIDIPQNTWIEQPWDMGVVFVPPISGR</sequence>
<keyword id="KW-0997">Cell inner membrane</keyword>
<keyword id="KW-1003">Cell membrane</keyword>
<keyword id="KW-0328">Glycosyltransferase</keyword>
<keyword id="KW-0460">Magnesium</keyword>
<keyword id="KW-0472">Membrane</keyword>
<keyword id="KW-0479">Metal-binding</keyword>
<keyword id="KW-0660">Purine salvage</keyword>
<keyword id="KW-0808">Transferase</keyword>
<accession>B5FJW9</accession>
<feature type="chain" id="PRO_1000188753" description="Xanthine-guanine phosphoribosyltransferase">
    <location>
        <begin position="1"/>
        <end position="152"/>
    </location>
</feature>
<feature type="binding site" evidence="1">
    <location>
        <begin position="37"/>
        <end position="38"/>
    </location>
    <ligand>
        <name>5-phospho-alpha-D-ribose 1-diphosphate</name>
        <dbReference type="ChEBI" id="CHEBI:58017"/>
    </ligand>
</feature>
<feature type="binding site" evidence="1">
    <location>
        <position position="69"/>
    </location>
    <ligand>
        <name>5-phospho-alpha-D-ribose 1-diphosphate</name>
        <dbReference type="ChEBI" id="CHEBI:58017"/>
    </ligand>
</feature>
<feature type="binding site" evidence="1">
    <location>
        <position position="69"/>
    </location>
    <ligand>
        <name>GMP</name>
        <dbReference type="ChEBI" id="CHEBI:58115"/>
    </ligand>
</feature>
<feature type="binding site" evidence="1">
    <location>
        <begin position="88"/>
        <end position="96"/>
    </location>
    <ligand>
        <name>5-phospho-alpha-D-ribose 1-diphosphate</name>
        <dbReference type="ChEBI" id="CHEBI:58017"/>
    </ligand>
</feature>
<feature type="binding site" evidence="1">
    <location>
        <position position="89"/>
    </location>
    <ligand>
        <name>Mg(2+)</name>
        <dbReference type="ChEBI" id="CHEBI:18420"/>
    </ligand>
</feature>
<feature type="binding site" evidence="1">
    <location>
        <begin position="92"/>
        <end position="96"/>
    </location>
    <ligand>
        <name>GMP</name>
        <dbReference type="ChEBI" id="CHEBI:58115"/>
    </ligand>
</feature>
<feature type="binding site" evidence="1">
    <location>
        <position position="92"/>
    </location>
    <ligand>
        <name>guanine</name>
        <dbReference type="ChEBI" id="CHEBI:16235"/>
    </ligand>
</feature>
<feature type="binding site" evidence="1">
    <location>
        <position position="92"/>
    </location>
    <ligand>
        <name>xanthine</name>
        <dbReference type="ChEBI" id="CHEBI:17712"/>
    </ligand>
</feature>
<feature type="binding site" evidence="1">
    <location>
        <begin position="134"/>
        <end position="135"/>
    </location>
    <ligand>
        <name>GMP</name>
        <dbReference type="ChEBI" id="CHEBI:58115"/>
    </ligand>
</feature>
<feature type="binding site" evidence="1">
    <location>
        <position position="135"/>
    </location>
    <ligand>
        <name>guanine</name>
        <dbReference type="ChEBI" id="CHEBI:16235"/>
    </ligand>
</feature>
<feature type="binding site" evidence="1">
    <location>
        <position position="135"/>
    </location>
    <ligand>
        <name>xanthine</name>
        <dbReference type="ChEBI" id="CHEBI:17712"/>
    </ligand>
</feature>
<dbReference type="EC" id="2.4.2.-" evidence="1"/>
<dbReference type="EC" id="2.4.2.22" evidence="1"/>
<dbReference type="EMBL" id="CP001144">
    <property type="protein sequence ID" value="ACH77185.1"/>
    <property type="molecule type" value="Genomic_DNA"/>
</dbReference>
<dbReference type="RefSeq" id="WP_001292018.1">
    <property type="nucleotide sequence ID" value="NC_011205.1"/>
</dbReference>
<dbReference type="SMR" id="B5FJW9"/>
<dbReference type="GeneID" id="66754798"/>
<dbReference type="KEGG" id="sed:SeD_A0347"/>
<dbReference type="HOGENOM" id="CLU_080904_3_0_6"/>
<dbReference type="UniPathway" id="UPA00602">
    <property type="reaction ID" value="UER00658"/>
</dbReference>
<dbReference type="UniPathway" id="UPA00909">
    <property type="reaction ID" value="UER00887"/>
</dbReference>
<dbReference type="Proteomes" id="UP000008322">
    <property type="component" value="Chromosome"/>
</dbReference>
<dbReference type="GO" id="GO:0005829">
    <property type="term" value="C:cytosol"/>
    <property type="evidence" value="ECO:0007669"/>
    <property type="project" value="TreeGrafter"/>
</dbReference>
<dbReference type="GO" id="GO:0005886">
    <property type="term" value="C:plasma membrane"/>
    <property type="evidence" value="ECO:0007669"/>
    <property type="project" value="UniProtKB-SubCell"/>
</dbReference>
<dbReference type="GO" id="GO:0052657">
    <property type="term" value="F:guanine phosphoribosyltransferase activity"/>
    <property type="evidence" value="ECO:0007669"/>
    <property type="project" value="RHEA"/>
</dbReference>
<dbReference type="GO" id="GO:0004422">
    <property type="term" value="F:hypoxanthine phosphoribosyltransferase activity"/>
    <property type="evidence" value="ECO:0007669"/>
    <property type="project" value="TreeGrafter"/>
</dbReference>
<dbReference type="GO" id="GO:0000287">
    <property type="term" value="F:magnesium ion binding"/>
    <property type="evidence" value="ECO:0007669"/>
    <property type="project" value="UniProtKB-UniRule"/>
</dbReference>
<dbReference type="GO" id="GO:0000310">
    <property type="term" value="F:xanthine phosphoribosyltransferase activity"/>
    <property type="evidence" value="ECO:0007669"/>
    <property type="project" value="UniProtKB-UniRule"/>
</dbReference>
<dbReference type="GO" id="GO:0032263">
    <property type="term" value="P:GMP salvage"/>
    <property type="evidence" value="ECO:0007669"/>
    <property type="project" value="UniProtKB-UniRule"/>
</dbReference>
<dbReference type="GO" id="GO:0032264">
    <property type="term" value="P:IMP salvage"/>
    <property type="evidence" value="ECO:0007669"/>
    <property type="project" value="TreeGrafter"/>
</dbReference>
<dbReference type="GO" id="GO:0006166">
    <property type="term" value="P:purine ribonucleoside salvage"/>
    <property type="evidence" value="ECO:0007669"/>
    <property type="project" value="UniProtKB-KW"/>
</dbReference>
<dbReference type="GO" id="GO:0032265">
    <property type="term" value="P:XMP salvage"/>
    <property type="evidence" value="ECO:0007669"/>
    <property type="project" value="UniProtKB-UniRule"/>
</dbReference>
<dbReference type="CDD" id="cd06223">
    <property type="entry name" value="PRTases_typeI"/>
    <property type="match status" value="1"/>
</dbReference>
<dbReference type="FunFam" id="3.40.50.2020:FF:000009">
    <property type="entry name" value="Xanthine phosphoribosyltransferase"/>
    <property type="match status" value="1"/>
</dbReference>
<dbReference type="Gene3D" id="3.40.50.2020">
    <property type="match status" value="1"/>
</dbReference>
<dbReference type="HAMAP" id="MF_01903">
    <property type="entry name" value="XGPRT"/>
    <property type="match status" value="1"/>
</dbReference>
<dbReference type="InterPro" id="IPR000836">
    <property type="entry name" value="PRibTrfase_dom"/>
</dbReference>
<dbReference type="InterPro" id="IPR029057">
    <property type="entry name" value="PRTase-like"/>
</dbReference>
<dbReference type="InterPro" id="IPR023747">
    <property type="entry name" value="Xanthine_Guanine_PRibTrfase"/>
</dbReference>
<dbReference type="NCBIfam" id="NF006613">
    <property type="entry name" value="PRK09177.1"/>
    <property type="match status" value="1"/>
</dbReference>
<dbReference type="PANTHER" id="PTHR39563">
    <property type="entry name" value="XANTHINE PHOSPHORIBOSYLTRANSFERASE"/>
    <property type="match status" value="1"/>
</dbReference>
<dbReference type="PANTHER" id="PTHR39563:SF1">
    <property type="entry name" value="XANTHINE-GUANINE PHOSPHORIBOSYLTRANSFERASE"/>
    <property type="match status" value="1"/>
</dbReference>
<dbReference type="Pfam" id="PF00156">
    <property type="entry name" value="Pribosyltran"/>
    <property type="match status" value="1"/>
</dbReference>
<dbReference type="SUPFAM" id="SSF53271">
    <property type="entry name" value="PRTase-like"/>
    <property type="match status" value="1"/>
</dbReference>
<dbReference type="PROSITE" id="PS00103">
    <property type="entry name" value="PUR_PYR_PR_TRANSFER"/>
    <property type="match status" value="1"/>
</dbReference>
<proteinExistence type="inferred from homology"/>